<proteinExistence type="inferred from homology"/>
<dbReference type="EMBL" id="CP000947">
    <property type="protein sequence ID" value="ACA31184.1"/>
    <property type="molecule type" value="Genomic_DNA"/>
</dbReference>
<dbReference type="RefSeq" id="WP_012340581.1">
    <property type="nucleotide sequence ID" value="NC_010519.1"/>
</dbReference>
<dbReference type="SMR" id="B0UUG0"/>
<dbReference type="STRING" id="228400.HSM_1439"/>
<dbReference type="GeneID" id="31487737"/>
<dbReference type="KEGG" id="hsm:HSM_1439"/>
<dbReference type="HOGENOM" id="CLU_028163_0_0_6"/>
<dbReference type="GO" id="GO:0008832">
    <property type="term" value="F:dGTPase activity"/>
    <property type="evidence" value="ECO:0007669"/>
    <property type="project" value="TreeGrafter"/>
</dbReference>
<dbReference type="GO" id="GO:0006203">
    <property type="term" value="P:dGTP catabolic process"/>
    <property type="evidence" value="ECO:0007669"/>
    <property type="project" value="TreeGrafter"/>
</dbReference>
<dbReference type="CDD" id="cd00077">
    <property type="entry name" value="HDc"/>
    <property type="match status" value="1"/>
</dbReference>
<dbReference type="Gene3D" id="1.10.3210.10">
    <property type="entry name" value="Hypothetical protein af1432"/>
    <property type="match status" value="2"/>
</dbReference>
<dbReference type="HAMAP" id="MF_01212">
    <property type="entry name" value="dGTPase_type2"/>
    <property type="match status" value="1"/>
</dbReference>
<dbReference type="InterPro" id="IPR006261">
    <property type="entry name" value="dGTPase"/>
</dbReference>
<dbReference type="InterPro" id="IPR050135">
    <property type="entry name" value="dGTPase-like"/>
</dbReference>
<dbReference type="InterPro" id="IPR023023">
    <property type="entry name" value="dNTPase_2"/>
</dbReference>
<dbReference type="InterPro" id="IPR003607">
    <property type="entry name" value="HD/PDEase_dom"/>
</dbReference>
<dbReference type="InterPro" id="IPR006674">
    <property type="entry name" value="HD_domain"/>
</dbReference>
<dbReference type="InterPro" id="IPR026875">
    <property type="entry name" value="PHydrolase_assoc_dom"/>
</dbReference>
<dbReference type="NCBIfam" id="NF041026">
    <property type="entry name" value="antiphage_dGTPase"/>
    <property type="match status" value="1"/>
</dbReference>
<dbReference type="NCBIfam" id="TIGR01353">
    <property type="entry name" value="dGTP_triPase"/>
    <property type="match status" value="1"/>
</dbReference>
<dbReference type="NCBIfam" id="NF003701">
    <property type="entry name" value="PRK05318.1"/>
    <property type="match status" value="1"/>
</dbReference>
<dbReference type="PANTHER" id="PTHR11373:SF40">
    <property type="entry name" value="DEOXYGUANOSINETRIPHOSPHATE TRIPHOSPHOHYDROLASE-LIKE PROTEIN 2"/>
    <property type="match status" value="1"/>
</dbReference>
<dbReference type="PANTHER" id="PTHR11373">
    <property type="entry name" value="DEOXYNUCLEOSIDE TRIPHOSPHATE TRIPHOSPHOHYDROLASE"/>
    <property type="match status" value="1"/>
</dbReference>
<dbReference type="Pfam" id="PF01966">
    <property type="entry name" value="HD"/>
    <property type="match status" value="1"/>
</dbReference>
<dbReference type="Pfam" id="PF13286">
    <property type="entry name" value="HD_assoc"/>
    <property type="match status" value="1"/>
</dbReference>
<dbReference type="SMART" id="SM00471">
    <property type="entry name" value="HDc"/>
    <property type="match status" value="1"/>
</dbReference>
<dbReference type="SUPFAM" id="SSF109604">
    <property type="entry name" value="HD-domain/PDEase-like"/>
    <property type="match status" value="1"/>
</dbReference>
<dbReference type="PROSITE" id="PS51831">
    <property type="entry name" value="HD"/>
    <property type="match status" value="1"/>
</dbReference>
<comment type="similarity">
    <text evidence="1">Belongs to the dGTPase family. Type 2 subfamily.</text>
</comment>
<accession>B0UUG0</accession>
<sequence>MKLQINSSWQERFLADPPREKDHRPPFRRDRGRILHSAAFRCLQAKTQIHAIGENDFYRTRLTHSLEVAQIGSSIVAQMKLIDSFISLAQQLKEDRAELQKQLKLILPSNDLIESLCFAHDIGHPPFGHGGEVALNYMMRHHGGFEGNAQTFRLLTKLEPYTPNAGMNLTRRTLLGVVKYPTILDRSSPQYHQGVIVDNVDSKYVKISAWKPGKGIFRDDLKMFEWLLEPLSENDRTLFGQYKKERTRPDEVLKTRYKSLDCSIMELADDIAYAVHDLEDAIVVGVVTFQQWQSAVEKLTECRSEWIVENVQSLSQKLFSELHYERKNAIGALVNYFITHVRWKINNGFSEPLLRYNAELPDEVIEVLTIFKHFVWEYVIKHVDTQRVEYKGQRMLTEMFQIFDSDPLRLLPRNTAMRWQKATETDRKRIICDYIAGMSDAYALRVYQQL</sequence>
<gene>
    <name type="ordered locus">HSM_1439</name>
</gene>
<name>DGTL1_HISS2</name>
<organism>
    <name type="scientific">Histophilus somni (strain 2336)</name>
    <name type="common">Haemophilus somnus</name>
    <dbReference type="NCBI Taxonomy" id="228400"/>
    <lineage>
        <taxon>Bacteria</taxon>
        <taxon>Pseudomonadati</taxon>
        <taxon>Pseudomonadota</taxon>
        <taxon>Gammaproteobacteria</taxon>
        <taxon>Pasteurellales</taxon>
        <taxon>Pasteurellaceae</taxon>
        <taxon>Histophilus</taxon>
    </lineage>
</organism>
<keyword id="KW-0378">Hydrolase</keyword>
<evidence type="ECO:0000255" key="1">
    <source>
        <dbReference type="HAMAP-Rule" id="MF_01212"/>
    </source>
</evidence>
<evidence type="ECO:0000255" key="2">
    <source>
        <dbReference type="PROSITE-ProRule" id="PRU01175"/>
    </source>
</evidence>
<protein>
    <recommendedName>
        <fullName evidence="1">Deoxyguanosinetriphosphate triphosphohydrolase-like protein</fullName>
    </recommendedName>
</protein>
<feature type="chain" id="PRO_1000138921" description="Deoxyguanosinetriphosphate triphosphohydrolase-like protein">
    <location>
        <begin position="1"/>
        <end position="450"/>
    </location>
</feature>
<feature type="domain" description="HD" evidence="2">
    <location>
        <begin position="61"/>
        <end position="274"/>
    </location>
</feature>
<reference key="1">
    <citation type="submission" date="2008-02" db="EMBL/GenBank/DDBJ databases">
        <title>Complete sequence of Haemophilus somnus 2336.</title>
        <authorList>
            <consortium name="US DOE Joint Genome Institute"/>
            <person name="Siddaramappa S."/>
            <person name="Duncan A.J."/>
            <person name="Challacombe J.F."/>
            <person name="Rainey D."/>
            <person name="Gillaspy A.F."/>
            <person name="Carson M."/>
            <person name="Gipson J."/>
            <person name="Gipson M."/>
            <person name="Bruce D."/>
            <person name="Detter J.C."/>
            <person name="Han C.S."/>
            <person name="Land M."/>
            <person name="Tapia R."/>
            <person name="Thompson L.S."/>
            <person name="Orvis J."/>
            <person name="Zaitshik J."/>
            <person name="Barnes G."/>
            <person name="Brettin T.S."/>
            <person name="Dyer D.W."/>
            <person name="Inzana T.J."/>
        </authorList>
    </citation>
    <scope>NUCLEOTIDE SEQUENCE [LARGE SCALE GENOMIC DNA]</scope>
    <source>
        <strain>2336</strain>
    </source>
</reference>